<accession>Q18F03</accession>
<gene>
    <name evidence="1" type="primary">hisC</name>
    <name type="ordered locus">HQ_3364A</name>
</gene>
<protein>
    <recommendedName>
        <fullName evidence="1">Histidinol-phosphate aminotransferase</fullName>
        <ecNumber evidence="1">2.6.1.9</ecNumber>
    </recommendedName>
    <alternativeName>
        <fullName evidence="1">Imidazole acetol-phosphate transaminase</fullName>
    </alternativeName>
</protein>
<proteinExistence type="inferred from homology"/>
<dbReference type="EC" id="2.6.1.9" evidence="1"/>
<dbReference type="EMBL" id="AM180088">
    <property type="protein sequence ID" value="CAJ53461.1"/>
    <property type="molecule type" value="Genomic_DNA"/>
</dbReference>
<dbReference type="RefSeq" id="WP_011572559.1">
    <property type="nucleotide sequence ID" value="NC_008212.1"/>
</dbReference>
<dbReference type="SMR" id="Q18F03"/>
<dbReference type="STRING" id="362976.HQ_3364A"/>
<dbReference type="GeneID" id="4194117"/>
<dbReference type="KEGG" id="hwa:HQ_3364A"/>
<dbReference type="eggNOG" id="arCOG04273">
    <property type="taxonomic scope" value="Archaea"/>
</dbReference>
<dbReference type="HOGENOM" id="CLU_017584_3_3_2"/>
<dbReference type="UniPathway" id="UPA00031">
    <property type="reaction ID" value="UER00012"/>
</dbReference>
<dbReference type="Proteomes" id="UP000001975">
    <property type="component" value="Chromosome"/>
</dbReference>
<dbReference type="GO" id="GO:0004400">
    <property type="term" value="F:histidinol-phosphate transaminase activity"/>
    <property type="evidence" value="ECO:0007669"/>
    <property type="project" value="UniProtKB-UniRule"/>
</dbReference>
<dbReference type="GO" id="GO:0030170">
    <property type="term" value="F:pyridoxal phosphate binding"/>
    <property type="evidence" value="ECO:0007669"/>
    <property type="project" value="InterPro"/>
</dbReference>
<dbReference type="GO" id="GO:0000105">
    <property type="term" value="P:L-histidine biosynthetic process"/>
    <property type="evidence" value="ECO:0007669"/>
    <property type="project" value="UniProtKB-UniRule"/>
</dbReference>
<dbReference type="CDD" id="cd00609">
    <property type="entry name" value="AAT_like"/>
    <property type="match status" value="1"/>
</dbReference>
<dbReference type="Gene3D" id="3.90.1150.10">
    <property type="entry name" value="Aspartate Aminotransferase, domain 1"/>
    <property type="match status" value="1"/>
</dbReference>
<dbReference type="Gene3D" id="3.40.640.10">
    <property type="entry name" value="Type I PLP-dependent aspartate aminotransferase-like (Major domain)"/>
    <property type="match status" value="1"/>
</dbReference>
<dbReference type="HAMAP" id="MF_01023">
    <property type="entry name" value="HisC_aminotrans_2"/>
    <property type="match status" value="1"/>
</dbReference>
<dbReference type="InterPro" id="IPR001917">
    <property type="entry name" value="Aminotrans_II_pyridoxalP_BS"/>
</dbReference>
<dbReference type="InterPro" id="IPR004839">
    <property type="entry name" value="Aminotransferase_I/II_large"/>
</dbReference>
<dbReference type="InterPro" id="IPR005861">
    <property type="entry name" value="HisP_aminotrans"/>
</dbReference>
<dbReference type="InterPro" id="IPR050106">
    <property type="entry name" value="HistidinolP_aminotransfase"/>
</dbReference>
<dbReference type="InterPro" id="IPR015424">
    <property type="entry name" value="PyrdxlP-dep_Trfase"/>
</dbReference>
<dbReference type="InterPro" id="IPR015421">
    <property type="entry name" value="PyrdxlP-dep_Trfase_major"/>
</dbReference>
<dbReference type="InterPro" id="IPR015422">
    <property type="entry name" value="PyrdxlP-dep_Trfase_small"/>
</dbReference>
<dbReference type="NCBIfam" id="TIGR01141">
    <property type="entry name" value="hisC"/>
    <property type="match status" value="1"/>
</dbReference>
<dbReference type="PANTHER" id="PTHR43643:SF6">
    <property type="entry name" value="HISTIDINOL-PHOSPHATE AMINOTRANSFERASE"/>
    <property type="match status" value="1"/>
</dbReference>
<dbReference type="PANTHER" id="PTHR43643">
    <property type="entry name" value="HISTIDINOL-PHOSPHATE AMINOTRANSFERASE 2"/>
    <property type="match status" value="1"/>
</dbReference>
<dbReference type="Pfam" id="PF00155">
    <property type="entry name" value="Aminotran_1_2"/>
    <property type="match status" value="1"/>
</dbReference>
<dbReference type="SUPFAM" id="SSF53383">
    <property type="entry name" value="PLP-dependent transferases"/>
    <property type="match status" value="1"/>
</dbReference>
<dbReference type="PROSITE" id="PS00599">
    <property type="entry name" value="AA_TRANSFER_CLASS_2"/>
    <property type="match status" value="1"/>
</dbReference>
<feature type="chain" id="PRO_1000063481" description="Histidinol-phosphate aminotransferase">
    <location>
        <begin position="1"/>
        <end position="376"/>
    </location>
</feature>
<feature type="region of interest" description="Disordered" evidence="2">
    <location>
        <begin position="1"/>
        <end position="21"/>
    </location>
</feature>
<feature type="modified residue" description="N6-(pyridoxal phosphate)lysine" evidence="1">
    <location>
        <position position="222"/>
    </location>
</feature>
<keyword id="KW-0028">Amino-acid biosynthesis</keyword>
<keyword id="KW-0032">Aminotransferase</keyword>
<keyword id="KW-0368">Histidine biosynthesis</keyword>
<keyword id="KW-0663">Pyridoxal phosphate</keyword>
<keyword id="KW-1185">Reference proteome</keyword>
<keyword id="KW-0808">Transferase</keyword>
<sequence length="376" mass="41083">MQPRDLSAHEPYVPGRGTKEVARELEVDPDSLIKLSSNENPHGPSPAAVDAIADTAETVNTYPKSSHTDLTARIADYWGLSPEQIWLSPGADGAIDYLSRAFLTPGDTMLISDPGFSYYPMSARYHHGSIRTYPVSKEQDFQQRASDILTQYDDERLLYVTTPHNPSGSELPIPEITALAEGVDDQTLIVIDEAYGEYSNNPSAIKLIQEYDNIAVLRTFSKAYGLAGLRIGYAAVPESWADAYARINTPFAANKTACQAALAAIEDQSHVEHSIETARWAREHYREELDARTWPSGGNFVLCEVGDGNAVAEAAKQEGVIIRDTTSFGLPECVRISCGTREQTKRAVDIISAVIEDVETATTTTESGVETEVGRP</sequence>
<name>HIS8_HALWD</name>
<evidence type="ECO:0000255" key="1">
    <source>
        <dbReference type="HAMAP-Rule" id="MF_01023"/>
    </source>
</evidence>
<evidence type="ECO:0000256" key="2">
    <source>
        <dbReference type="SAM" id="MobiDB-lite"/>
    </source>
</evidence>
<organism>
    <name type="scientific">Haloquadratum walsbyi (strain DSM 16790 / HBSQ001)</name>
    <dbReference type="NCBI Taxonomy" id="362976"/>
    <lineage>
        <taxon>Archaea</taxon>
        <taxon>Methanobacteriati</taxon>
        <taxon>Methanobacteriota</taxon>
        <taxon>Stenosarchaea group</taxon>
        <taxon>Halobacteria</taxon>
        <taxon>Halobacteriales</taxon>
        <taxon>Haloferacaceae</taxon>
        <taxon>Haloquadratum</taxon>
    </lineage>
</organism>
<comment type="catalytic activity">
    <reaction evidence="1">
        <text>L-histidinol phosphate + 2-oxoglutarate = 3-(imidazol-4-yl)-2-oxopropyl phosphate + L-glutamate</text>
        <dbReference type="Rhea" id="RHEA:23744"/>
        <dbReference type="ChEBI" id="CHEBI:16810"/>
        <dbReference type="ChEBI" id="CHEBI:29985"/>
        <dbReference type="ChEBI" id="CHEBI:57766"/>
        <dbReference type="ChEBI" id="CHEBI:57980"/>
        <dbReference type="EC" id="2.6.1.9"/>
    </reaction>
</comment>
<comment type="cofactor">
    <cofactor evidence="1">
        <name>pyridoxal 5'-phosphate</name>
        <dbReference type="ChEBI" id="CHEBI:597326"/>
    </cofactor>
</comment>
<comment type="pathway">
    <text evidence="1">Amino-acid biosynthesis; L-histidine biosynthesis; L-histidine from 5-phospho-alpha-D-ribose 1-diphosphate: step 7/9.</text>
</comment>
<comment type="similarity">
    <text evidence="1">Belongs to the class-II pyridoxal-phosphate-dependent aminotransferase family. Histidinol-phosphate aminotransferase subfamily.</text>
</comment>
<reference key="1">
    <citation type="journal article" date="2006" name="BMC Genomics">
        <title>The genome of the square archaeon Haloquadratum walsbyi: life at the limits of water activity.</title>
        <authorList>
            <person name="Bolhuis H."/>
            <person name="Palm P."/>
            <person name="Wende A."/>
            <person name="Falb M."/>
            <person name="Rampp M."/>
            <person name="Rodriguez-Valera F."/>
            <person name="Pfeiffer F."/>
            <person name="Oesterhelt D."/>
        </authorList>
    </citation>
    <scope>NUCLEOTIDE SEQUENCE [LARGE SCALE GENOMIC DNA]</scope>
    <source>
        <strain>DSM 16790 / HBSQ001</strain>
    </source>
</reference>